<organism>
    <name type="scientific">Rotavirus A (strain RVA/Cow/United States/WC3/1981/G6P7[5])</name>
    <name type="common">RV-A</name>
    <name type="synonym">Rotavirus (strain Wistar calf 3)</name>
    <dbReference type="NCBI Taxonomy" id="578828"/>
    <lineage>
        <taxon>Viruses</taxon>
        <taxon>Riboviria</taxon>
        <taxon>Orthornavirae</taxon>
        <taxon>Duplornaviricota</taxon>
        <taxon>Resentoviricetes</taxon>
        <taxon>Reovirales</taxon>
        <taxon>Sedoreoviridae</taxon>
        <taxon>Rotavirus</taxon>
        <taxon>Rotavirus A</taxon>
    </lineage>
</organism>
<keyword id="KW-0175">Coiled coil</keyword>
<keyword id="KW-1035">Host cytoplasm</keyword>
<keyword id="KW-0945">Host-virus interaction</keyword>
<keyword id="KW-0694">RNA-binding</keyword>
<keyword id="KW-0810">Translation regulation</keyword>
<comment type="function">
    <text evidence="1">Plays an important role in stimulating the translation of viral mRNAs. These mRNAs are capped but not polyadenylated, instead terminating in a conserved sequence 'GACC' at the 3' that is recognized by NSP3, which competes with host PABPC1 for EIF4G1 binding. The interaction between NSP3 and host EIF4G1 stabilizes the EIF4E-EIF4G1 interaction, thereby facilitating the initiation of capped mRNA translation.</text>
</comment>
<comment type="subunit">
    <text evidence="1">Homodimer. Interacts (via the coiled-coil region) with host ZC3H7B (via LD motif). Interacts with host EIF4G1.</text>
</comment>
<comment type="subcellular location">
    <subcellularLocation>
        <location evidence="1">Host cytoplasm</location>
    </subcellularLocation>
</comment>
<comment type="similarity">
    <text evidence="1">Belongs to the rotavirus NSP3 family.</text>
</comment>
<protein>
    <recommendedName>
        <fullName evidence="1">Non-structural protein 3</fullName>
        <shortName evidence="1">NSP3</shortName>
    </recommendedName>
    <alternativeName>
        <fullName evidence="1">NCVP4</fullName>
    </alternativeName>
    <alternativeName>
        <fullName evidence="1">Non-structural RNA-binding protein 34</fullName>
        <shortName evidence="1">NS34</shortName>
    </alternativeName>
</protein>
<dbReference type="EMBL" id="EF990701">
    <property type="protein sequence ID" value="ABV66076.1"/>
    <property type="molecule type" value="Genomic_RNA"/>
</dbReference>
<dbReference type="SMR" id="B2BRG4"/>
<dbReference type="Proteomes" id="UP000007181">
    <property type="component" value="Genome"/>
</dbReference>
<dbReference type="GO" id="GO:0030430">
    <property type="term" value="C:host cell cytoplasm"/>
    <property type="evidence" value="ECO:0007669"/>
    <property type="project" value="UniProtKB-SubCell"/>
</dbReference>
<dbReference type="GO" id="GO:0003723">
    <property type="term" value="F:RNA binding"/>
    <property type="evidence" value="ECO:0007669"/>
    <property type="project" value="UniProtKB-UniRule"/>
</dbReference>
<dbReference type="GO" id="GO:0006417">
    <property type="term" value="P:regulation of translation"/>
    <property type="evidence" value="ECO:0007669"/>
    <property type="project" value="UniProtKB-UniRule"/>
</dbReference>
<dbReference type="CDD" id="cd20714">
    <property type="entry name" value="NSP3_rotavirus"/>
    <property type="match status" value="1"/>
</dbReference>
<dbReference type="Gene3D" id="3.30.70.1610">
    <property type="match status" value="1"/>
</dbReference>
<dbReference type="Gene3D" id="1.20.5.970">
    <property type="entry name" value="Nonstructural RNA-binding protein"/>
    <property type="match status" value="1"/>
</dbReference>
<dbReference type="Gene3D" id="6.10.280.20">
    <property type="entry name" value="Rotavirus non-structural protein NSP3, N-terminal domain"/>
    <property type="match status" value="1"/>
</dbReference>
<dbReference type="HAMAP" id="MF_04094">
    <property type="entry name" value="ROTA_A_NSP3"/>
    <property type="match status" value="1"/>
</dbReference>
<dbReference type="HAMAP" id="MF_04090">
    <property type="entry name" value="ROTA_NSP3"/>
    <property type="match status" value="1"/>
</dbReference>
<dbReference type="InterPro" id="IPR042519">
    <property type="entry name" value="NSP3_N_rotavirus"/>
</dbReference>
<dbReference type="InterPro" id="IPR036082">
    <property type="entry name" value="NSP3_sf"/>
</dbReference>
<dbReference type="InterPro" id="IPR002873">
    <property type="entry name" value="Rotavirus_NSP3"/>
</dbReference>
<dbReference type="Pfam" id="PF01665">
    <property type="entry name" value="Rota_NSP3"/>
    <property type="match status" value="1"/>
</dbReference>
<dbReference type="SUPFAM" id="SSF69903">
    <property type="entry name" value="NSP3 homodimer"/>
    <property type="match status" value="1"/>
</dbReference>
<dbReference type="SUPFAM" id="SSF58030">
    <property type="entry name" value="Rotavirus nonstructural proteins"/>
    <property type="match status" value="1"/>
</dbReference>
<proteinExistence type="inferred from homology"/>
<accession>B2BRG4</accession>
<feature type="chain" id="PRO_0000369447" description="Non-structural protein 3">
    <location>
        <begin position="1"/>
        <end position="313"/>
    </location>
</feature>
<feature type="region of interest" description="RNA-binding" evidence="1">
    <location>
        <begin position="1"/>
        <end position="149"/>
    </location>
</feature>
<feature type="region of interest" description="Dimerization" evidence="1">
    <location>
        <begin position="150"/>
        <end position="206"/>
    </location>
</feature>
<feature type="region of interest" description="Interaction with host ZC3H7B" evidence="1">
    <location>
        <begin position="170"/>
        <end position="234"/>
    </location>
</feature>
<feature type="region of interest" description="Interaction with host EIF4G1" evidence="1">
    <location>
        <begin position="208"/>
        <end position="313"/>
    </location>
</feature>
<feature type="coiled-coil region" evidence="1">
    <location>
        <begin position="166"/>
        <end position="237"/>
    </location>
</feature>
<name>NSP3_ROTW3</name>
<evidence type="ECO:0000255" key="1">
    <source>
        <dbReference type="HAMAP-Rule" id="MF_04094"/>
    </source>
</evidence>
<organismHost>
    <name type="scientific">Bos taurus</name>
    <name type="common">Bovine</name>
    <dbReference type="NCBI Taxonomy" id="9913"/>
</organismHost>
<reference key="1">
    <citation type="journal article" date="2008" name="J. Virol.">
        <title>Full genome-based classification of rotaviruses reveals a common origin between human Wa-Like and porcine rotavirus strains and human DS-1-like and bovine rotavirus strains.</title>
        <authorList>
            <person name="Matthijnssens J."/>
            <person name="Ciarlet M."/>
            <person name="Heiman E.M."/>
            <person name="Arijs I."/>
            <person name="Delbeke T."/>
            <person name="McDonald S.M."/>
            <person name="Palombo E.A."/>
            <person name="Iturriza-Gomara M."/>
            <person name="Maes P."/>
            <person name="Patton J.T."/>
            <person name="Rahman M."/>
            <person name="Van Ranst M."/>
        </authorList>
    </citation>
    <scope>NUCLEOTIDE SEQUENCE [GENOMIC RNA]</scope>
</reference>
<sequence>MLKMESTQQMASSIINTSFEAAVVAATSTLELMGIQYDYNEVYTRVKSKFEYVMDDSGVKNNLLGKAATIDQALNGKFGSAARNRNWMADTRTTARLDEDVNKLRMMLSSKGIDQKMRVLNACFSVKRAPGKSSSIIKCTRLMRDKIERGEVEVDDSFVEEKMEVDTIDWKSRYEQLEKRFESLKQRVNEKYTSWVQKAKKVNENMYSLQNVISQQQSQIADLQNYCNKLEVDLQNKISSLVSSVEWYLKSMELPDEIKTDIEQQLNSIDVINPINAIDDFESLIRNIILDYDRIFLMFKGLMRQCNYEYTYE</sequence>